<sequence>MPLPSSQPSASSSPNLKRKQPTISSFFTKKPQAPKQSTSNEGPAPIDNDSEITDKLAEDDEEDIVAPVPKRTKSNGSLTVNRPQSPKAKSVSRVEQESSQRTELSKFASSPAIETEGNEATELDGSAKVRQQEREKLHQRFVRKLGGPDCLVGIGRNCVGETTSIEEAAEGDEDDETPQPVQPKGKAGKKGGGKLTPMEKQVIEIKKKHMDTILLIEVGYKFRFFGEDARIAAKELSIVCIPGKFRYDEHPSEAHLDRFASASIPVQRLHVHVKRLVAAGHKVGVVRQLETAALKAAGDNRNAPFVRKLTNVYTKSTYIDDIESLEGSTAGASGASATGYILCITETNARGWGNDEKVHVGIVAVQPTTGDIVYDEFDDGFMRSEIETRLLHIAPCEMLIVGELSKATEKLVQHLSGSKMNVFGDKVRVERAPKAKTAAAESHSHVSSFYAEKMKSADAADDEVASNLLQKVLGLPDQVTICLSAMIKHMTEYGLEHVLQLTKYFQHFSSRSHMLLNGNTLTSLEIYQNQTDYSSKGSLFWTLDRTQTRFGQRMLRKWVGRPLLDRRQLEDRVNAVEELKDFRNVVMVERIKGLLGKIKHDLEKGLIRIYYGKCSRPELLTILQTMQMIAQEFADIESPADTGFSSPAISQAIMSLPTILKDVVFFLNKINMHAARNDDKYEFFREEEETEEISEHKLGIGAVEHELEEHRPVAGEALGKKMVTYVSVAGIDYLVEVENNSPAIKRVPASWMKISGTKKVSRFHTPEVVKMIRQRDQHREALAAACDKAFLALQAEIATNYQALRDCVQSLATLDCLVSLATLASQPGYVKPEYTEETCIHVEQGRHPMVEQLLLDSYVPNDINLDSSKTRALLVTGPNMGGKSSYVRQVALIAIMGQIGSYVPAQAAKLGMLDAVFTRMGAFDNMLAGESTFMVELSETADILKQATPRSLVILDELGRGTSTHDGVAIAQAVLDYMVRSIRSLTLFITHYQHLSAMVHSFPDGELRNVHMRFSESGTGADEDITFLYEIGEGVAHRSYGLNVARLANLPAPLLEMAKQKSAELEEKIRRRRLAGFVAAVGAVVQSNQADESVIERLVSSMEEL</sequence>
<comment type="function">
    <text evidence="1">Component of the post-replicative DNA mismatch repair system (MMR). Heterodimerizes with msh2 to form MutS beta, which binds to DNA mismatches thereby initiating DNA repair. Msh3 provides substrate-binding and substrate specificity to the complex. When bound, the MutS beta heterodimer bends the DNA helix and shields approximately 20 base pairs. Acts mainly to repair insertion-deletion loops (IDLs) from 2 to 13 nucleotides in size, but can also repair base-base and single insertion-deletion mismatches that occur during replication. After mismatch binding, forms a ternary complex with the MutL alpha heterodimer, which is thought to be responsible for directing the downstream MMR events, including strand discrimination, excision, and resynthesis. ATP binding and hydrolysis play a pivotal role in mismatch repair functions (By similarity).</text>
</comment>
<comment type="subunit">
    <text evidence="1">Heterodimer consisting of msh2-msh3 (MutS beta). Forms a ternary complex with MutL alpha (mlh1-pms1) (By similarity).</text>
</comment>
<comment type="subcellular location">
    <subcellularLocation>
        <location evidence="1">Nucleus</location>
    </subcellularLocation>
</comment>
<comment type="similarity">
    <text evidence="4">Belongs to the DNA mismatch repair MutS family. MSH3 subfamily.</text>
</comment>
<comment type="sequence caution" evidence="4">
    <conflict type="erroneous gene model prediction">
        <sequence resource="EMBL-CDS" id="CBF75474"/>
    </conflict>
</comment>
<comment type="sequence caution" evidence="4">
    <conflict type="erroneous gene model prediction">
        <sequence resource="EMBL-CDS" id="EAA59957"/>
    </conflict>
</comment>
<dbReference type="EMBL" id="AACD01000061">
    <property type="protein sequence ID" value="EAA59957.1"/>
    <property type="status" value="ALT_SEQ"/>
    <property type="molecule type" value="Genomic_DNA"/>
</dbReference>
<dbReference type="EMBL" id="BN001302">
    <property type="protein sequence ID" value="CBF75474.1"/>
    <property type="status" value="ALT_SEQ"/>
    <property type="molecule type" value="Genomic_DNA"/>
</dbReference>
<dbReference type="RefSeq" id="XP_661353.1">
    <property type="nucleotide sequence ID" value="XM_656261.1"/>
</dbReference>
<dbReference type="SMR" id="Q5B6T1"/>
<dbReference type="FunCoup" id="Q5B6T1">
    <property type="interactions" value="751"/>
</dbReference>
<dbReference type="STRING" id="227321.Q5B6T1"/>
<dbReference type="KEGG" id="ani:ANIA_03749"/>
<dbReference type="eggNOG" id="KOG0218">
    <property type="taxonomic scope" value="Eukaryota"/>
</dbReference>
<dbReference type="HOGENOM" id="CLU_002472_0_0_1"/>
<dbReference type="InParanoid" id="Q5B6T1"/>
<dbReference type="OrthoDB" id="121051at2759"/>
<dbReference type="Proteomes" id="UP000000560">
    <property type="component" value="Chromosome II"/>
</dbReference>
<dbReference type="GO" id="GO:0005634">
    <property type="term" value="C:nucleus"/>
    <property type="evidence" value="ECO:0000318"/>
    <property type="project" value="GO_Central"/>
</dbReference>
<dbReference type="GO" id="GO:0005524">
    <property type="term" value="F:ATP binding"/>
    <property type="evidence" value="ECO:0007669"/>
    <property type="project" value="UniProtKB-KW"/>
</dbReference>
<dbReference type="GO" id="GO:0140664">
    <property type="term" value="F:ATP-dependent DNA damage sensor activity"/>
    <property type="evidence" value="ECO:0007669"/>
    <property type="project" value="InterPro"/>
</dbReference>
<dbReference type="GO" id="GO:0003690">
    <property type="term" value="F:double-stranded DNA binding"/>
    <property type="evidence" value="ECO:0000318"/>
    <property type="project" value="GO_Central"/>
</dbReference>
<dbReference type="GO" id="GO:0030983">
    <property type="term" value="F:mismatched DNA binding"/>
    <property type="evidence" value="ECO:0007669"/>
    <property type="project" value="InterPro"/>
</dbReference>
<dbReference type="GO" id="GO:0006298">
    <property type="term" value="P:mismatch repair"/>
    <property type="evidence" value="ECO:0000318"/>
    <property type="project" value="GO_Central"/>
</dbReference>
<dbReference type="GO" id="GO:0006312">
    <property type="term" value="P:mitotic recombination"/>
    <property type="evidence" value="ECO:0000318"/>
    <property type="project" value="GO_Central"/>
</dbReference>
<dbReference type="FunFam" id="3.30.420.110:FF:000008">
    <property type="entry name" value="DNA mismatch repair protein"/>
    <property type="match status" value="1"/>
</dbReference>
<dbReference type="FunFam" id="3.40.1170.10:FF:000006">
    <property type="entry name" value="DNA mismatch repair protein"/>
    <property type="match status" value="1"/>
</dbReference>
<dbReference type="FunFam" id="1.10.1420.10:FF:000004">
    <property type="entry name" value="DNA mismatch repair protein Msh3"/>
    <property type="match status" value="1"/>
</dbReference>
<dbReference type="FunFam" id="3.40.50.300:FF:001909">
    <property type="entry name" value="DNA mismatch repair protein msh3"/>
    <property type="match status" value="1"/>
</dbReference>
<dbReference type="Gene3D" id="1.10.1420.10">
    <property type="match status" value="2"/>
</dbReference>
<dbReference type="Gene3D" id="3.40.1170.10">
    <property type="entry name" value="DNA repair protein MutS, domain I"/>
    <property type="match status" value="1"/>
</dbReference>
<dbReference type="Gene3D" id="3.30.420.110">
    <property type="entry name" value="MutS, connector domain"/>
    <property type="match status" value="1"/>
</dbReference>
<dbReference type="Gene3D" id="3.40.50.300">
    <property type="entry name" value="P-loop containing nucleotide triphosphate hydrolases"/>
    <property type="match status" value="1"/>
</dbReference>
<dbReference type="InterPro" id="IPR007695">
    <property type="entry name" value="DNA_mismatch_repair_MutS-lik_N"/>
</dbReference>
<dbReference type="InterPro" id="IPR017261">
    <property type="entry name" value="DNA_mismatch_repair_MutS/MSH"/>
</dbReference>
<dbReference type="InterPro" id="IPR000432">
    <property type="entry name" value="DNA_mismatch_repair_MutS_C"/>
</dbReference>
<dbReference type="InterPro" id="IPR007696">
    <property type="entry name" value="DNA_mismatch_repair_MutS_core"/>
</dbReference>
<dbReference type="InterPro" id="IPR016151">
    <property type="entry name" value="DNA_mismatch_repair_MutS_N"/>
</dbReference>
<dbReference type="InterPro" id="IPR036187">
    <property type="entry name" value="DNA_mismatch_repair_MutS_sf"/>
</dbReference>
<dbReference type="InterPro" id="IPR007860">
    <property type="entry name" value="DNA_mmatch_repair_MutS_con_dom"/>
</dbReference>
<dbReference type="InterPro" id="IPR045076">
    <property type="entry name" value="MutS"/>
</dbReference>
<dbReference type="InterPro" id="IPR036678">
    <property type="entry name" value="MutS_con_dom_sf"/>
</dbReference>
<dbReference type="InterPro" id="IPR027417">
    <property type="entry name" value="P-loop_NTPase"/>
</dbReference>
<dbReference type="NCBIfam" id="NF003810">
    <property type="entry name" value="PRK05399.1"/>
    <property type="match status" value="1"/>
</dbReference>
<dbReference type="PANTHER" id="PTHR11361:SF122">
    <property type="entry name" value="DNA MISMATCH REPAIR PROTEIN MSH3"/>
    <property type="match status" value="1"/>
</dbReference>
<dbReference type="PANTHER" id="PTHR11361">
    <property type="entry name" value="DNA MISMATCH REPAIR PROTEIN MUTS FAMILY MEMBER"/>
    <property type="match status" value="1"/>
</dbReference>
<dbReference type="Pfam" id="PF01624">
    <property type="entry name" value="MutS_I"/>
    <property type="match status" value="1"/>
</dbReference>
<dbReference type="Pfam" id="PF05188">
    <property type="entry name" value="MutS_II"/>
    <property type="match status" value="1"/>
</dbReference>
<dbReference type="Pfam" id="PF05192">
    <property type="entry name" value="MutS_III"/>
    <property type="match status" value="1"/>
</dbReference>
<dbReference type="Pfam" id="PF00488">
    <property type="entry name" value="MutS_V"/>
    <property type="match status" value="1"/>
</dbReference>
<dbReference type="PIRSF" id="PIRSF037677">
    <property type="entry name" value="DNA_mis_repair_Msh6"/>
    <property type="match status" value="1"/>
</dbReference>
<dbReference type="SMART" id="SM00534">
    <property type="entry name" value="MUTSac"/>
    <property type="match status" value="1"/>
</dbReference>
<dbReference type="SMART" id="SM00533">
    <property type="entry name" value="MUTSd"/>
    <property type="match status" value="1"/>
</dbReference>
<dbReference type="SUPFAM" id="SSF55271">
    <property type="entry name" value="DNA repair protein MutS, domain I"/>
    <property type="match status" value="1"/>
</dbReference>
<dbReference type="SUPFAM" id="SSF48334">
    <property type="entry name" value="DNA repair protein MutS, domain III"/>
    <property type="match status" value="1"/>
</dbReference>
<dbReference type="SUPFAM" id="SSF52540">
    <property type="entry name" value="P-loop containing nucleoside triphosphate hydrolases"/>
    <property type="match status" value="1"/>
</dbReference>
<dbReference type="PROSITE" id="PS00486">
    <property type="entry name" value="DNA_MISMATCH_REPAIR_2"/>
    <property type="match status" value="1"/>
</dbReference>
<proteinExistence type="inferred from homology"/>
<gene>
    <name type="primary">msh3</name>
    <name type="ORF">AN3749</name>
</gene>
<reference key="1">
    <citation type="journal article" date="2005" name="Nature">
        <title>Sequencing of Aspergillus nidulans and comparative analysis with A. fumigatus and A. oryzae.</title>
        <authorList>
            <person name="Galagan J.E."/>
            <person name="Calvo S.E."/>
            <person name="Cuomo C."/>
            <person name="Ma L.-J."/>
            <person name="Wortman J.R."/>
            <person name="Batzoglou S."/>
            <person name="Lee S.-I."/>
            <person name="Bastuerkmen M."/>
            <person name="Spevak C.C."/>
            <person name="Clutterbuck J."/>
            <person name="Kapitonov V."/>
            <person name="Jurka J."/>
            <person name="Scazzocchio C."/>
            <person name="Farman M.L."/>
            <person name="Butler J."/>
            <person name="Purcell S."/>
            <person name="Harris S."/>
            <person name="Braus G.H."/>
            <person name="Draht O."/>
            <person name="Busch S."/>
            <person name="D'Enfert C."/>
            <person name="Bouchier C."/>
            <person name="Goldman G.H."/>
            <person name="Bell-Pedersen D."/>
            <person name="Griffiths-Jones S."/>
            <person name="Doonan J.H."/>
            <person name="Yu J."/>
            <person name="Vienken K."/>
            <person name="Pain A."/>
            <person name="Freitag M."/>
            <person name="Selker E.U."/>
            <person name="Archer D.B."/>
            <person name="Penalva M.A."/>
            <person name="Oakley B.R."/>
            <person name="Momany M."/>
            <person name="Tanaka T."/>
            <person name="Kumagai T."/>
            <person name="Asai K."/>
            <person name="Machida M."/>
            <person name="Nierman W.C."/>
            <person name="Denning D.W."/>
            <person name="Caddick M.X."/>
            <person name="Hynes M."/>
            <person name="Paoletti M."/>
            <person name="Fischer R."/>
            <person name="Miller B.L."/>
            <person name="Dyer P.S."/>
            <person name="Sachs M.S."/>
            <person name="Osmani S.A."/>
            <person name="Birren B.W."/>
        </authorList>
    </citation>
    <scope>NUCLEOTIDE SEQUENCE [LARGE SCALE GENOMIC DNA]</scope>
    <source>
        <strain>FGSC A4 / ATCC 38163 / CBS 112.46 / NRRL 194 / M139</strain>
    </source>
</reference>
<reference key="2">
    <citation type="journal article" date="2009" name="Fungal Genet. Biol.">
        <title>The 2008 update of the Aspergillus nidulans genome annotation: a community effort.</title>
        <authorList>
            <person name="Wortman J.R."/>
            <person name="Gilsenan J.M."/>
            <person name="Joardar V."/>
            <person name="Deegan J."/>
            <person name="Clutterbuck J."/>
            <person name="Andersen M.R."/>
            <person name="Archer D."/>
            <person name="Bencina M."/>
            <person name="Braus G."/>
            <person name="Coutinho P."/>
            <person name="von Dohren H."/>
            <person name="Doonan J."/>
            <person name="Driessen A.J."/>
            <person name="Durek P."/>
            <person name="Espeso E."/>
            <person name="Fekete E."/>
            <person name="Flipphi M."/>
            <person name="Estrada C.G."/>
            <person name="Geysens S."/>
            <person name="Goldman G."/>
            <person name="de Groot P.W."/>
            <person name="Hansen K."/>
            <person name="Harris S.D."/>
            <person name="Heinekamp T."/>
            <person name="Helmstaedt K."/>
            <person name="Henrissat B."/>
            <person name="Hofmann G."/>
            <person name="Homan T."/>
            <person name="Horio T."/>
            <person name="Horiuchi H."/>
            <person name="James S."/>
            <person name="Jones M."/>
            <person name="Karaffa L."/>
            <person name="Karanyi Z."/>
            <person name="Kato M."/>
            <person name="Keller N."/>
            <person name="Kelly D.E."/>
            <person name="Kiel J.A."/>
            <person name="Kim J.M."/>
            <person name="van der Klei I.J."/>
            <person name="Klis F.M."/>
            <person name="Kovalchuk A."/>
            <person name="Krasevec N."/>
            <person name="Kubicek C.P."/>
            <person name="Liu B."/>
            <person name="Maccabe A."/>
            <person name="Meyer V."/>
            <person name="Mirabito P."/>
            <person name="Miskei M."/>
            <person name="Mos M."/>
            <person name="Mullins J."/>
            <person name="Nelson D.R."/>
            <person name="Nielsen J."/>
            <person name="Oakley B.R."/>
            <person name="Osmani S.A."/>
            <person name="Pakula T."/>
            <person name="Paszewski A."/>
            <person name="Paulsen I."/>
            <person name="Pilsyk S."/>
            <person name="Pocsi I."/>
            <person name="Punt P.J."/>
            <person name="Ram A.F."/>
            <person name="Ren Q."/>
            <person name="Robellet X."/>
            <person name="Robson G."/>
            <person name="Seiboth B."/>
            <person name="van Solingen P."/>
            <person name="Specht T."/>
            <person name="Sun J."/>
            <person name="Taheri-Talesh N."/>
            <person name="Takeshita N."/>
            <person name="Ussery D."/>
            <person name="vanKuyk P.A."/>
            <person name="Visser H."/>
            <person name="van de Vondervoort P.J."/>
            <person name="de Vries R.P."/>
            <person name="Walton J."/>
            <person name="Xiang X."/>
            <person name="Xiong Y."/>
            <person name="Zeng A.P."/>
            <person name="Brandt B.W."/>
            <person name="Cornell M.J."/>
            <person name="van den Hondel C.A."/>
            <person name="Visser J."/>
            <person name="Oliver S.G."/>
            <person name="Turner G."/>
        </authorList>
    </citation>
    <scope>GENOME REANNOTATION</scope>
    <source>
        <strain>FGSC A4 / ATCC 38163 / CBS 112.46 / NRRL 194 / M139</strain>
    </source>
</reference>
<protein>
    <recommendedName>
        <fullName>DNA mismatch repair protein msh3</fullName>
    </recommendedName>
    <alternativeName>
        <fullName>MutS protein homolog 3</fullName>
    </alternativeName>
</protein>
<evidence type="ECO:0000250" key="1"/>
<evidence type="ECO:0000255" key="2"/>
<evidence type="ECO:0000256" key="3">
    <source>
        <dbReference type="SAM" id="MobiDB-lite"/>
    </source>
</evidence>
<evidence type="ECO:0000305" key="4"/>
<feature type="chain" id="PRO_0000338521" description="DNA mismatch repair protein msh3">
    <location>
        <begin position="1"/>
        <end position="1105"/>
    </location>
</feature>
<feature type="region of interest" description="Disordered" evidence="3">
    <location>
        <begin position="1"/>
        <end position="132"/>
    </location>
</feature>
<feature type="region of interest" description="Disordered" evidence="3">
    <location>
        <begin position="166"/>
        <end position="195"/>
    </location>
</feature>
<feature type="region of interest" description="Mispair-binding domain" evidence="1">
    <location>
        <begin position="189"/>
        <end position="316"/>
    </location>
</feature>
<feature type="compositionally biased region" description="Low complexity" evidence="3">
    <location>
        <begin position="1"/>
        <end position="14"/>
    </location>
</feature>
<feature type="compositionally biased region" description="Polar residues" evidence="3">
    <location>
        <begin position="74"/>
        <end position="84"/>
    </location>
</feature>
<feature type="compositionally biased region" description="Basic and acidic residues" evidence="3">
    <location>
        <begin position="92"/>
        <end position="104"/>
    </location>
</feature>
<feature type="compositionally biased region" description="Acidic residues" evidence="3">
    <location>
        <begin position="167"/>
        <end position="177"/>
    </location>
</feature>
<feature type="binding site" evidence="2">
    <location>
        <begin position="877"/>
        <end position="884"/>
    </location>
    <ligand>
        <name>ATP</name>
        <dbReference type="ChEBI" id="CHEBI:30616"/>
    </ligand>
</feature>
<name>MSH3_EMENI</name>
<organism>
    <name type="scientific">Emericella nidulans (strain FGSC A4 / ATCC 38163 / CBS 112.46 / NRRL 194 / M139)</name>
    <name type="common">Aspergillus nidulans</name>
    <dbReference type="NCBI Taxonomy" id="227321"/>
    <lineage>
        <taxon>Eukaryota</taxon>
        <taxon>Fungi</taxon>
        <taxon>Dikarya</taxon>
        <taxon>Ascomycota</taxon>
        <taxon>Pezizomycotina</taxon>
        <taxon>Eurotiomycetes</taxon>
        <taxon>Eurotiomycetidae</taxon>
        <taxon>Eurotiales</taxon>
        <taxon>Aspergillaceae</taxon>
        <taxon>Aspergillus</taxon>
        <taxon>Aspergillus subgen. Nidulantes</taxon>
    </lineage>
</organism>
<accession>Q5B6T1</accession>
<accession>C8V799</accession>
<keyword id="KW-0067">ATP-binding</keyword>
<keyword id="KW-0227">DNA damage</keyword>
<keyword id="KW-0234">DNA repair</keyword>
<keyword id="KW-0238">DNA-binding</keyword>
<keyword id="KW-0547">Nucleotide-binding</keyword>
<keyword id="KW-0539">Nucleus</keyword>
<keyword id="KW-1185">Reference proteome</keyword>